<accession>P0A9J0</accession>
<accession>P25537</accession>
<accession>P76677</accession>
<accession>Q2M8W7</accession>
<sequence>MTAELLVNVTPSETRVAYIDGGILQEIHIEREARRGIVGNIYKGRVSRVLPGMQAAFVDIGLDKAAFLHASDIMPHTECVAGEEQKQFTVRDISELVRQGQDLMVQVVKDPLGTKGARLTTDITLPSRYLVFMPGASHVGVSQRIESESERERLKKVVAEYCDEQGGFIIRTAAEGVGEAELASDAAYLKRVWTKVMERKKRPQTRYQLYGELALAQRVLRDFADAELDRIRVDSRLTYEALLEFTSEYIPEMTSKLEHYTGRQPIFDLFDVENEIQRALERKVELKSGGYLIIDQTEAMTTVDINTGAFVGHRNLDDTIFNTNIEATQAIARQLRLRNLGGIIIIDFIDMNNEDHRRRVLHSLEQALSKDRVKTSVNGFSALGLVEMTRKRTRESIEHVLCNECPTCHGRGTVKTVETVCYEIMREIVRVHHAYDSDRFLVYASPAVAEALKGEESHSLAEVEIFVGKQVKVQIEPLYNQEQFDVVMM</sequence>
<proteinExistence type="evidence at protein level"/>
<protein>
    <recommendedName>
        <fullName evidence="20 21">Ribonuclease G</fullName>
        <shortName evidence="20 21">RNase G</shortName>
        <ecNumber>3.1.26.-</ecNumber>
    </recommendedName>
    <alternativeName>
        <fullName evidence="23">Cytoplasmic axial filament protein</fullName>
        <shortName evidence="23">CafA protein</shortName>
    </alternativeName>
</protein>
<dbReference type="EC" id="3.1.26.-"/>
<dbReference type="EMBL" id="X57166">
    <property type="protein sequence ID" value="CAA40457.1"/>
    <property type="molecule type" value="Genomic_DNA"/>
</dbReference>
<dbReference type="EMBL" id="U18997">
    <property type="protein sequence ID" value="AAA58050.1"/>
    <property type="status" value="ALT_INIT"/>
    <property type="molecule type" value="Genomic_DNA"/>
</dbReference>
<dbReference type="EMBL" id="U00096">
    <property type="protein sequence ID" value="AAC76279.2"/>
    <property type="molecule type" value="Genomic_DNA"/>
</dbReference>
<dbReference type="EMBL" id="AP009048">
    <property type="protein sequence ID" value="BAE77289.1"/>
    <property type="molecule type" value="Genomic_DNA"/>
</dbReference>
<dbReference type="PIR" id="A65117">
    <property type="entry name" value="A65117"/>
</dbReference>
<dbReference type="RefSeq" id="NP_417713.2">
    <property type="nucleotide sequence ID" value="NC_000913.3"/>
</dbReference>
<dbReference type="RefSeq" id="WP_000123197.1">
    <property type="nucleotide sequence ID" value="NZ_STEB01000012.1"/>
</dbReference>
<dbReference type="SMR" id="P0A9J0"/>
<dbReference type="BioGRID" id="4262071">
    <property type="interactions" value="239"/>
</dbReference>
<dbReference type="BioGRID" id="852056">
    <property type="interactions" value="1"/>
</dbReference>
<dbReference type="DIP" id="DIP-48098N"/>
<dbReference type="FunCoup" id="P0A9J0">
    <property type="interactions" value="421"/>
</dbReference>
<dbReference type="IntAct" id="P0A9J0">
    <property type="interactions" value="20"/>
</dbReference>
<dbReference type="STRING" id="511145.b3247"/>
<dbReference type="jPOST" id="P0A9J0"/>
<dbReference type="PaxDb" id="511145-b3247"/>
<dbReference type="EnsemblBacteria" id="AAC76279">
    <property type="protein sequence ID" value="AAC76279"/>
    <property type="gene ID" value="b3247"/>
</dbReference>
<dbReference type="GeneID" id="93778739"/>
<dbReference type="GeneID" id="947744"/>
<dbReference type="KEGG" id="ecj:JW3216"/>
<dbReference type="KEGG" id="eco:b3247"/>
<dbReference type="KEGG" id="ecoc:C3026_17655"/>
<dbReference type="PATRIC" id="fig|1411691.4.peg.3482"/>
<dbReference type="EchoBASE" id="EB1276"/>
<dbReference type="eggNOG" id="COG1530">
    <property type="taxonomic scope" value="Bacteria"/>
</dbReference>
<dbReference type="HOGENOM" id="CLU_003468_5_3_6"/>
<dbReference type="InParanoid" id="P0A9J0"/>
<dbReference type="OMA" id="IGTKGPR"/>
<dbReference type="OrthoDB" id="9804278at2"/>
<dbReference type="PhylomeDB" id="P0A9J0"/>
<dbReference type="BioCyc" id="EcoCyc:EG11299-MONOMER"/>
<dbReference type="BioCyc" id="MetaCyc:EG11299-MONOMER"/>
<dbReference type="BRENDA" id="3.1.26.3">
    <property type="organism ID" value="2165"/>
</dbReference>
<dbReference type="PRO" id="PR:P0A9J0"/>
<dbReference type="Proteomes" id="UP000000625">
    <property type="component" value="Chromosome"/>
</dbReference>
<dbReference type="GO" id="GO:0005737">
    <property type="term" value="C:cytoplasm"/>
    <property type="evidence" value="ECO:0000318"/>
    <property type="project" value="GO_Central"/>
</dbReference>
<dbReference type="GO" id="GO:0005856">
    <property type="term" value="C:cytoskeleton"/>
    <property type="evidence" value="ECO:0007669"/>
    <property type="project" value="UniProtKB-SubCell"/>
</dbReference>
<dbReference type="GO" id="GO:0005886">
    <property type="term" value="C:plasma membrane"/>
    <property type="evidence" value="ECO:0007669"/>
    <property type="project" value="UniProtKB-SubCell"/>
</dbReference>
<dbReference type="GO" id="GO:0004519">
    <property type="term" value="F:endonuclease activity"/>
    <property type="evidence" value="ECO:0007669"/>
    <property type="project" value="UniProtKB-KW"/>
</dbReference>
<dbReference type="GO" id="GO:0046872">
    <property type="term" value="F:metal ion binding"/>
    <property type="evidence" value="ECO:0007669"/>
    <property type="project" value="UniProtKB-KW"/>
</dbReference>
<dbReference type="GO" id="GO:0042803">
    <property type="term" value="F:protein homodimerization activity"/>
    <property type="evidence" value="ECO:0000353"/>
    <property type="project" value="EcoCyc"/>
</dbReference>
<dbReference type="GO" id="GO:0008996">
    <property type="term" value="F:ribonuclease G activity"/>
    <property type="evidence" value="ECO:0000314"/>
    <property type="project" value="EcoCyc"/>
</dbReference>
<dbReference type="GO" id="GO:0004540">
    <property type="term" value="F:RNA nuclease activity"/>
    <property type="evidence" value="ECO:0000318"/>
    <property type="project" value="GO_Central"/>
</dbReference>
<dbReference type="GO" id="GO:0019843">
    <property type="term" value="F:rRNA binding"/>
    <property type="evidence" value="ECO:0007669"/>
    <property type="project" value="UniProtKB-KW"/>
</dbReference>
<dbReference type="GO" id="GO:0000049">
    <property type="term" value="F:tRNA binding"/>
    <property type="evidence" value="ECO:0007669"/>
    <property type="project" value="UniProtKB-KW"/>
</dbReference>
<dbReference type="GO" id="GO:0051301">
    <property type="term" value="P:cell division"/>
    <property type="evidence" value="ECO:0007669"/>
    <property type="project" value="UniProtKB-KW"/>
</dbReference>
<dbReference type="GO" id="GO:0030490">
    <property type="term" value="P:maturation of SSU-rRNA"/>
    <property type="evidence" value="ECO:0000314"/>
    <property type="project" value="EcoCyc"/>
</dbReference>
<dbReference type="GO" id="GO:0006364">
    <property type="term" value="P:rRNA processing"/>
    <property type="evidence" value="ECO:0000315"/>
    <property type="project" value="EcoliWiki"/>
</dbReference>
<dbReference type="GO" id="GO:0008033">
    <property type="term" value="P:tRNA processing"/>
    <property type="evidence" value="ECO:0007669"/>
    <property type="project" value="UniProtKB-KW"/>
</dbReference>
<dbReference type="CDD" id="cd04453">
    <property type="entry name" value="S1_RNase_E"/>
    <property type="match status" value="1"/>
</dbReference>
<dbReference type="FunFam" id="2.40.50.140:FF:000028">
    <property type="entry name" value="Ribonuclease G"/>
    <property type="match status" value="1"/>
</dbReference>
<dbReference type="FunFam" id="3.40.1260.20:FF:000001">
    <property type="entry name" value="Ribonuclease G Rng"/>
    <property type="match status" value="1"/>
</dbReference>
<dbReference type="Gene3D" id="2.40.50.140">
    <property type="entry name" value="Nucleic acid-binding proteins"/>
    <property type="match status" value="1"/>
</dbReference>
<dbReference type="Gene3D" id="3.40.1260.20">
    <property type="entry name" value="Ribonuclease E, catalytic domain"/>
    <property type="match status" value="1"/>
</dbReference>
<dbReference type="InterPro" id="IPR012340">
    <property type="entry name" value="NA-bd_OB-fold"/>
</dbReference>
<dbReference type="InterPro" id="IPR019307">
    <property type="entry name" value="RNA-bd_AU-1/RNase_E/G"/>
</dbReference>
<dbReference type="InterPro" id="IPR004659">
    <property type="entry name" value="RNase_E/G"/>
</dbReference>
<dbReference type="InterPro" id="IPR048583">
    <property type="entry name" value="RNase_E_G_thioredoxin-like"/>
</dbReference>
<dbReference type="InterPro" id="IPR003029">
    <property type="entry name" value="S1_domain"/>
</dbReference>
<dbReference type="NCBIfam" id="NF008689">
    <property type="entry name" value="PRK11712.1"/>
    <property type="match status" value="1"/>
</dbReference>
<dbReference type="NCBIfam" id="TIGR00757">
    <property type="entry name" value="RNaseEG"/>
    <property type="match status" value="1"/>
</dbReference>
<dbReference type="PANTHER" id="PTHR30001">
    <property type="entry name" value="RIBONUCLEASE"/>
    <property type="match status" value="1"/>
</dbReference>
<dbReference type="PANTHER" id="PTHR30001:SF0">
    <property type="entry name" value="RIBONUCLEASE G"/>
    <property type="match status" value="1"/>
</dbReference>
<dbReference type="Pfam" id="PF10150">
    <property type="entry name" value="RNase_E_G"/>
    <property type="match status" value="1"/>
</dbReference>
<dbReference type="Pfam" id="PF20833">
    <property type="entry name" value="RNase_E_G_Thio"/>
    <property type="match status" value="1"/>
</dbReference>
<dbReference type="Pfam" id="PF00575">
    <property type="entry name" value="S1"/>
    <property type="match status" value="1"/>
</dbReference>
<dbReference type="SMART" id="SM00316">
    <property type="entry name" value="S1"/>
    <property type="match status" value="1"/>
</dbReference>
<dbReference type="SUPFAM" id="SSF50249">
    <property type="entry name" value="Nucleic acid-binding proteins"/>
    <property type="match status" value="1"/>
</dbReference>
<dbReference type="PROSITE" id="PS50126">
    <property type="entry name" value="S1"/>
    <property type="match status" value="1"/>
</dbReference>
<keyword id="KW-0131">Cell cycle</keyword>
<keyword id="KW-0132">Cell division</keyword>
<keyword id="KW-0997">Cell inner membrane</keyword>
<keyword id="KW-1003">Cell membrane</keyword>
<keyword id="KW-0963">Cytoplasm</keyword>
<keyword id="KW-0206">Cytoskeleton</keyword>
<keyword id="KW-0903">Direct protein sequencing</keyword>
<keyword id="KW-0255">Endonuclease</keyword>
<keyword id="KW-0378">Hydrolase</keyword>
<keyword id="KW-0460">Magnesium</keyword>
<keyword id="KW-0472">Membrane</keyword>
<keyword id="KW-0479">Metal-binding</keyword>
<keyword id="KW-0540">Nuclease</keyword>
<keyword id="KW-1185">Reference proteome</keyword>
<keyword id="KW-0694">RNA-binding</keyword>
<keyword id="KW-0698">rRNA processing</keyword>
<keyword id="KW-0699">rRNA-binding</keyword>
<keyword id="KW-0819">tRNA processing</keyword>
<keyword id="KW-0820">tRNA-binding</keyword>
<reference key="1">
    <citation type="journal article" date="1991" name="Gene">
        <title>Sequence of the downstream flanking region of the shape-determining genes mreBCD of Escherichia coli.</title>
        <authorList>
            <person name="Wachi M."/>
            <person name="Doi M."/>
            <person name="Ueda T."/>
            <person name="Ueki M."/>
            <person name="Tsuritani K."/>
            <person name="Nagai K."/>
            <person name="Matsuhashi M."/>
        </authorList>
    </citation>
    <scope>NUCLEOTIDE SEQUENCE [GENOMIC DNA]</scope>
    <source>
        <strain>K12</strain>
    </source>
</reference>
<reference key="2">
    <citation type="journal article" date="1997" name="Science">
        <title>The complete genome sequence of Escherichia coli K-12.</title>
        <authorList>
            <person name="Blattner F.R."/>
            <person name="Plunkett G. III"/>
            <person name="Bloch C.A."/>
            <person name="Perna N.T."/>
            <person name="Burland V."/>
            <person name="Riley M."/>
            <person name="Collado-Vides J."/>
            <person name="Glasner J.D."/>
            <person name="Rode C.K."/>
            <person name="Mayhew G.F."/>
            <person name="Gregor J."/>
            <person name="Davis N.W."/>
            <person name="Kirkpatrick H.A."/>
            <person name="Goeden M.A."/>
            <person name="Rose D.J."/>
            <person name="Mau B."/>
            <person name="Shao Y."/>
        </authorList>
    </citation>
    <scope>NUCLEOTIDE SEQUENCE [LARGE SCALE GENOMIC DNA]</scope>
    <source>
        <strain>K12 / MG1655 / ATCC 47076</strain>
    </source>
</reference>
<reference key="3">
    <citation type="journal article" date="2006" name="Mol. Syst. Biol.">
        <title>Highly accurate genome sequences of Escherichia coli K-12 strains MG1655 and W3110.</title>
        <authorList>
            <person name="Hayashi K."/>
            <person name="Morooka N."/>
            <person name="Yamamoto Y."/>
            <person name="Fujita K."/>
            <person name="Isono K."/>
            <person name="Choi S."/>
            <person name="Ohtsubo E."/>
            <person name="Baba T."/>
            <person name="Wanner B.L."/>
            <person name="Mori H."/>
            <person name="Horiuchi T."/>
        </authorList>
    </citation>
    <scope>NUCLEOTIDE SEQUENCE [LARGE SCALE GENOMIC DNA]</scope>
    <source>
        <strain>K12 / W3110 / ATCC 27325 / DSM 5911</strain>
    </source>
</reference>
<reference key="4">
    <citation type="journal article" date="1994" name="J. Bacteriol.">
        <title>Cytoplasmic axial filaments in Escherichia coli cells: possible function in the mechanism of chromosome segregation and cell division.</title>
        <authorList>
            <person name="Okada Y."/>
            <person name="Wachi M."/>
            <person name="Hirata A."/>
            <person name="Suzuki K."/>
            <person name="Nagai K."/>
            <person name="Matsuhashi M."/>
        </authorList>
    </citation>
    <scope>PROTEIN SEQUENCE OF 2-11</scope>
    <scope>CHARACTERIZATION</scope>
    <scope>SUBCELLULAR LOCATION</scope>
</reference>
<reference key="5">
    <citation type="journal article" date="2003" name="Mol. Microbiol.">
        <title>The quaternary structure of RNase G from Escherichia coli.</title>
        <authorList>
            <person name="Briant D.J."/>
            <person name="Hankins J.S."/>
            <person name="Cook M.A."/>
            <person name="Mackie G.A."/>
        </authorList>
    </citation>
    <scope>PROTEIN SEQUENCE OF 2-7 AND 315-320</scope>
    <scope>SUBUNIT</scope>
</reference>
<reference key="6">
    <citation type="journal article" date="1999" name="Biochem. Biophys. Res. Commun.">
        <title>Escherichia coli cafA gene encodes a novel RNase, designated as RNase G, involved in processing of the 5' end of 16S rRNA.</title>
        <authorList>
            <person name="Wachi M."/>
            <person name="Umitsuki G."/>
            <person name="Shimizu M."/>
            <person name="Takada A."/>
            <person name="Nagai K."/>
        </authorList>
    </citation>
    <scope>FUNCTION IN 16S RRNA MATURATION</scope>
    <scope>DISRUPTION PHENOTYPE</scope>
    <scope>DOMAIN</scope>
    <source>
        <strain>K12 / W3110 / ATCC 27325 / DSM 5911</strain>
    </source>
</reference>
<reference key="7">
    <citation type="journal article" date="1999" name="EMBO J.">
        <title>RNase G (CafA protein) and RNase E are both required for the 5' maturation of 16S ribosomal RNA.</title>
        <authorList>
            <person name="Li Z."/>
            <person name="Pandit S."/>
            <person name="Deutscher M.P."/>
        </authorList>
    </citation>
    <scope>FUNCTION IN 16S RRNA MATURATION</scope>
    <scope>DISRUPTION PHENOTYPE</scope>
    <source>
        <strain>K12</strain>
    </source>
</reference>
<reference key="8">
    <citation type="journal article" date="2000" name="J. Bacteriol.">
        <title>Regions of RNase E important for 5'-end-dependent RNA cleavage and autoregulated synthesis.</title>
        <authorList>
            <person name="Jiang X."/>
            <person name="Diwa A."/>
            <person name="Belasco J.G."/>
        </authorList>
    </citation>
    <scope>FUNCTION AS AN ENDONUCLEASE</scope>
    <scope>SUBSTRATE SPECIFICITY</scope>
</reference>
<reference key="9">
    <citation type="journal article" date="2000" name="J. Biol. Chem.">
        <title>The CafA protein required for the 5'-maturation of 16 S rRNA is a 5'-end-dependent ribonuclease that has context-dependent broad sequence specificity.</title>
        <authorList>
            <person name="Tock M.R."/>
            <person name="Walsh A.P."/>
            <person name="Carroll G."/>
            <person name="McDowall K.J."/>
        </authorList>
    </citation>
    <scope>FUNCTION AS AN ENDONUCLEASE</scope>
    <scope>SUBSTRATE SPECIFICITY</scope>
</reference>
<reference key="10">
    <citation type="journal article" date="2001" name="Genes Cells">
        <title>Involvement of RNase G in in vivo mRNA metabolism in Escherichia coli.</title>
        <authorList>
            <person name="Umitsuki G."/>
            <person name="Wachi M."/>
            <person name="Takada A."/>
            <person name="Hikichi T."/>
            <person name="Nagai K."/>
        </authorList>
    </citation>
    <scope>FUNCTION IN MRNA STABILITY</scope>
    <scope>DISRUPTION PHENOTYPE</scope>
    <source>
        <strain>K12 / MC1061 / ATCC 53338 / DSM 7140</strain>
    </source>
</reference>
<reference key="11">
    <citation type="journal article" date="2002" name="Biosci. Biotechnol. Biochem.">
        <title>RNase G-dependent degradation of the eno mRNA encoding a glycolysis enzyme enolase in Escherichia coli.</title>
        <authorList>
            <person name="Kaga N."/>
            <person name="Umitsuki G."/>
            <person name="Nagai K."/>
            <person name="Wachi M."/>
        </authorList>
    </citation>
    <scope>FUNCTION IN MRNA STABILITY</scope>
    <scope>DISRUPTION PHENOTYPE</scope>
    <source>
        <strain>K12 / MC1061 / ATCC 53338 / DSM 7140</strain>
    </source>
</reference>
<reference key="12">
    <citation type="journal article" date="2004" name="Proc. Natl. Acad. Sci. U.S.A.">
        <title>Catalytic activation of multimeric RNase E and RNase G by 5'-monophosphorylated RNA.</title>
        <authorList>
            <person name="Jiang X."/>
            <person name="Belasco J.G."/>
        </authorList>
    </citation>
    <scope>ACTIVITY REGULATION</scope>
    <scope>BIOPHYSICOCHEMICAL PROPERTIES</scope>
    <scope>SUBUNIT</scope>
</reference>
<reference key="13">
    <citation type="journal article" date="2008" name="Mol. Microbiol.">
        <title>Sensing of 5' monophosphate by Escherichia coli RNase G can significantly enhance association with RNA and stimulate the decay of functional mRNA transcripts in vivo.</title>
        <authorList>
            <person name="Jourdan S.S."/>
            <person name="McDowall K.J."/>
        </authorList>
    </citation>
    <scope>FUNCTION</scope>
    <scope>ACTIVITY REGULATION</scope>
    <scope>BIOPHYSICOCHEMICAL PROPERTIES</scope>
    <scope>SUBUNIT</scope>
    <scope>MUTAGENESIS OF VAL-131; ARG-171; THR-172; ASP-304 AND ASP-347</scope>
</reference>
<reference key="14">
    <citation type="journal article" date="2010" name="Proc. Natl. Acad. Sci. U.S.A.">
        <title>Appropriate maturation and folding of 16S rRNA during 30S subunit biogenesis are critical for translational fidelity.</title>
        <authorList>
            <person name="Roy-Chaudhuri B."/>
            <person name="Kirthi N."/>
            <person name="Culver G.M."/>
        </authorList>
    </citation>
    <scope>FUNCTION IN 16S RRNA MATURATION</scope>
    <scope>DISRUPTION PHENOTYPE</scope>
    <source>
        <strain>K12 / BW25113</strain>
    </source>
</reference>
<reference key="15">
    <citation type="journal article" date="2011" name="J. Microbiol.">
        <title>RNase G participates in processing of the 5'-end of 23S ribosomal RNA.</title>
        <authorList>
            <person name="Song W.S."/>
            <person name="Lee M."/>
            <person name="Lee K."/>
        </authorList>
    </citation>
    <scope>FUNCTION IN 23S RRNA MATURATION</scope>
    <scope>DISRUPTION PHENOTYPE</scope>
</reference>
<reference key="16">
    <citation type="journal article" date="2012" name="Proc. Natl. Acad. Sci. U.S.A.">
        <title>Membrane binding of Escherichia coli RNase E catalytic domain stabilizes protein structure and increases RNA substrate affinity.</title>
        <authorList>
            <person name="Murashko O.N."/>
            <person name="Kaberdin V.R."/>
            <person name="Lin-Chao S."/>
        </authorList>
    </citation>
    <scope>SUBCELLULAR LOCATION</scope>
</reference>
<reference key="17">
    <citation type="journal article" date="2014" name="Nucleic Acids Res.">
        <title>Antibiotic stress-induced modulation of the endoribonucleolytic activity of RNase III and RNase G confers resistance to aminoglycoside antibiotics in Escherichia coli.</title>
        <authorList>
            <person name="Song W."/>
            <person name="Kim Y.H."/>
            <person name="Sim S.H."/>
            <person name="Hwang S."/>
            <person name="Lee J.H."/>
            <person name="Lee Y."/>
            <person name="Bae J."/>
            <person name="Hwang J."/>
            <person name="Lee K."/>
        </authorList>
    </citation>
    <scope>FUNCTION IN 16S RRNA MATURATION</scope>
    <scope>INDUCTION</scope>
    <scope>DISRUPTION PHENOTYPE</scope>
    <source>
        <strain>K12 / MG1655 / ATCC 47076</strain>
        <strain>N3433</strain>
    </source>
</reference>
<reference key="18">
    <citation type="journal article" date="2016" name="J. Biol. Chem.">
        <title>Distinct Requirements for 5'-Monophosphate-assisted RNA Cleavage by Escherichia coli RNase E and RNase G.</title>
        <authorList>
            <person name="Richards J."/>
            <person name="Belasco J.G."/>
        </authorList>
    </citation>
    <scope>SUBSTRATE SPECIFICITY</scope>
</reference>
<reference key="19">
    <citation type="journal article" date="2016" name="J. Biol. Chem.">
        <title>Distinct requirements for 5'-monophosphate-assisted RNA cleavage by Escherichia coli RNase E and RNase G.</title>
        <authorList>
            <person name="Richards J."/>
            <person name="Belasco J.G."/>
        </authorList>
    </citation>
    <scope>ERRATUM OF PUBMED:26694614</scope>
</reference>
<reference key="20">
    <citation type="journal article" date="2016" name="Nucleic Acids Res.">
        <title>Endonucleolytic cleavages by RNase E generate the mature 3' termini of the three proline tRNAs in Escherichia coli.</title>
        <authorList>
            <person name="Mohanty B.K."/>
            <person name="Petree J.R."/>
            <person name="Kushner S.R."/>
        </authorList>
    </citation>
    <scope>FUNCTION IN TRNA(PRO) 3' PROCESSING</scope>
    <source>
        <strain>K12 / MG1655 / ATCC 47076</strain>
    </source>
</reference>
<reference key="21">
    <citation type="journal article" date="2020" name="Nucleic Acids Res.">
        <title>RNase AM, a 5' to 3' exonuclease, matures the 5' end of all three ribosomal RNAs in E. coli.</title>
        <authorList>
            <person name="Jain C."/>
        </authorList>
    </citation>
    <scope>FUNCTION IN 16S RRNA PRECURSOR PROCESSING</scope>
    <scope>DISRUPTION PHENOTYPE</scope>
    <source>
        <strain>K12 / MG1655 / ATCC 47076</strain>
    </source>
</reference>
<reference key="22">
    <citation type="journal article" date="2009" name="Acta Crystallogr. F">
        <title>Crystallization and preliminary X-ray analysis of Escherichia coli RNase G.</title>
        <authorList>
            <person name="Fang P."/>
            <person name="Wang J."/>
            <person name="Li X."/>
            <person name="Guo M."/>
            <person name="Xing L."/>
            <person name="Cao X."/>
            <person name="Zhu Y."/>
            <person name="Gao Y."/>
            <person name="Niu L."/>
            <person name="Teng M."/>
        </authorList>
    </citation>
    <scope>PRELIMINARY CRYSTALLIZATION</scope>
</reference>
<gene>
    <name evidence="20 21" type="primary">rng</name>
    <name evidence="23" type="synonym">cafA</name>
    <name evidence="22" type="synonym">orfF</name>
    <name type="synonym">yhdF</name>
    <name type="ordered locus">b3247</name>
    <name type="ordered locus">JW3216</name>
</gene>
<name>RNG_ECOLI</name>
<feature type="initiator methionine" description="Removed" evidence="9 19">
    <location>
        <position position="1"/>
    </location>
</feature>
<feature type="chain" id="PRO_0000097383" description="Ribonuclease G">
    <location>
        <begin position="2"/>
        <end position="489"/>
    </location>
</feature>
<feature type="domain" description="S1 motif" evidence="2">
    <location>
        <begin position="39"/>
        <end position="128"/>
    </location>
</feature>
<feature type="region of interest" description="Required for function, when replaced by GVHSRDDKQAGALHRTPADFRSL in mutant BUMMER, cells accumulate 16.3S rRNA precursor" evidence="4">
    <location>
        <begin position="244"/>
        <end position="489"/>
    </location>
</feature>
<feature type="binding site" evidence="1 27">
    <location>
        <position position="304"/>
    </location>
    <ligand>
        <name>Mg(2+)</name>
        <dbReference type="ChEBI" id="CHEBI:18420"/>
        <note>catalytic</note>
    </ligand>
</feature>
<feature type="binding site" evidence="1 27">
    <location>
        <position position="347"/>
    </location>
    <ligand>
        <name>Mg(2+)</name>
        <dbReference type="ChEBI" id="CHEBI:18420"/>
        <note>catalytic</note>
    </ligand>
</feature>
<feature type="mutagenesis site" description="3.9-fold reduced activity on 5'-PO(4) substrate, 1.9-fold reduced activity on 5'-OH substrate. Has wild-type 16S rRNA in vivo." evidence="11">
    <original>V</original>
    <variation>A</variation>
    <location>
        <position position="131"/>
    </location>
</feature>
<feature type="mutagenesis site" description="Loss of activity." evidence="11">
    <original>R</original>
    <variation>A</variation>
    <location>
        <position position="171"/>
    </location>
</feature>
<feature type="mutagenesis site" description="34-fold reduced activity on 5'-PO(4) substrate, 2.4-fold reduced activity on 5'-OH substrate. Binds 5'-PO(4) substrate 65-fold less well than wild-type, kcat is nearly wild-type. Has wild-type 16S rRNA in vivo." evidence="11">
    <original>R</original>
    <variation>K</variation>
    <location>
        <position position="171"/>
    </location>
</feature>
<feature type="mutagenesis site" description="82-fold reduced activity on 5'-PO(4) substrate, 4.9-fold reduced activity on 5'-OH substrate." evidence="11">
    <original>T</original>
    <variation>V</variation>
    <location>
        <position position="172"/>
    </location>
</feature>
<feature type="mutagenesis site" description="Loss of activity. Accumulates about 50% 16.3S rRNA, 50% wild-type 16SrRNA in vivo." evidence="11">
    <original>D</original>
    <variation>N</variation>
    <location>
        <position position="304"/>
    </location>
</feature>
<feature type="mutagenesis site" description="Loss of activity." evidence="11">
    <original>D</original>
    <variation>N</variation>
    <location>
        <position position="347"/>
    </location>
</feature>
<evidence type="ECO:0000250" key="1">
    <source>
        <dbReference type="UniProtKB" id="P21513"/>
    </source>
</evidence>
<evidence type="ECO:0000255" key="2">
    <source>
        <dbReference type="PROSITE-ProRule" id="PRU00180"/>
    </source>
</evidence>
<evidence type="ECO:0000269" key="3">
    <source>
    </source>
</evidence>
<evidence type="ECO:0000269" key="4">
    <source>
    </source>
</evidence>
<evidence type="ECO:0000269" key="5">
    <source>
    </source>
</evidence>
<evidence type="ECO:0000269" key="6">
    <source>
    </source>
</evidence>
<evidence type="ECO:0000269" key="7">
    <source>
    </source>
</evidence>
<evidence type="ECO:0000269" key="8">
    <source>
    </source>
</evidence>
<evidence type="ECO:0000269" key="9">
    <source>
    </source>
</evidence>
<evidence type="ECO:0000269" key="10">
    <source>
    </source>
</evidence>
<evidence type="ECO:0000269" key="11">
    <source>
    </source>
</evidence>
<evidence type="ECO:0000269" key="12">
    <source>
    </source>
</evidence>
<evidence type="ECO:0000269" key="13">
    <source>
    </source>
</evidence>
<evidence type="ECO:0000269" key="14">
    <source>
    </source>
</evidence>
<evidence type="ECO:0000269" key="15">
    <source>
    </source>
</evidence>
<evidence type="ECO:0000269" key="16">
    <source>
    </source>
</evidence>
<evidence type="ECO:0000269" key="17">
    <source>
    </source>
</evidence>
<evidence type="ECO:0000269" key="18">
    <source>
    </source>
</evidence>
<evidence type="ECO:0000269" key="19">
    <source>
    </source>
</evidence>
<evidence type="ECO:0000303" key="20">
    <source>
    </source>
</evidence>
<evidence type="ECO:0000303" key="21">
    <source>
    </source>
</evidence>
<evidence type="ECO:0000303" key="22">
    <source>
    </source>
</evidence>
<evidence type="ECO:0000303" key="23">
    <source>
    </source>
</evidence>
<evidence type="ECO:0000305" key="24"/>
<evidence type="ECO:0000305" key="25">
    <source>
    </source>
</evidence>
<evidence type="ECO:0000305" key="26">
    <source>
    </source>
</evidence>
<evidence type="ECO:0000305" key="27">
    <source>
    </source>
</evidence>
<evidence type="ECO:0000305" key="28">
    <source>
    </source>
</evidence>
<evidence type="ECO:0000305" key="29">
    <source>
    </source>
</evidence>
<comment type="function">
    <text evidence="3 4 5 6 7 8 11 12 13 15 16 17 18 19 29">An endonuclease that acts in the processing of the 5'-end of precursors of 16S rRNA, generates a precursor with 3 extra nucleotides at its 5'-end (which is matured by Rnm) (PubMed:10329633, PubMed:10362534, PubMed:10722715, PubMed:20176963, PubMed:24489121, PubMed:26694614, PubMed:32343306). It prefers 5'-monophosphorylated over 5'-OH or 5'-triphosphorylated substrates and cleaves single-stranded sites rich in A and U residues; contributes to RNA turnover (PubMed:10722715, PubMed:10762247, PubMed:11380618, PubMed:12450135, PubMed:18078441, PubMed:21717341). 5'-monophosphate-assisted cleavage requires at least 2 and preferably 3 or more unpaired 5'-terminal nucleotides for cleavage. The optimal spacing between the 5' end and the scissile phosphate appears to be 6 nucleotides. Any sequence of unpaired nucleotides at the 5'-end is tolerated (PubMed:26694614). Processes the 5'-end precursors of 23S rRNA (PubMed:21717341). Participates in processing of tRNA(Pro) (proK and proM) (PubMed:27288443). Also involved in metabolism of some mRNAs (PubMed:11380618, PubMed:12450135, PubMed:18078441). Cells overproducing this protein form chains of cell with cytoplasmic axial filaments (PubMed:8300545). Could be involved in chromosome segregation and cell division. It may be one of the components of the cytoplasmic axial filaments bundles, or merely regulate the formation of this structure (Probable).</text>
</comment>
<comment type="function">
    <text evidence="15">Confers adaptive resistance to aminoglycoside antibiotics through modulation of 16S rRNA processing.</text>
</comment>
<comment type="cofactor">
    <cofactor evidence="1">
        <name>Mg(2+)</name>
        <dbReference type="ChEBI" id="CHEBI:18420"/>
    </cofactor>
    <text evidence="1">Binds 1 Mg(2+) ion per subunit.</text>
</comment>
<comment type="activity regulation">
    <text evidence="10 11">The presence of a 5'-monophosphate on substrate RNA accelerates its cleavage by catalytically activating the enzyme (PubMed:15197283). In contrast, another group has shown that the enzyme has a higher affinity for 5'-monophosphorylated substrate, which enhances substrate binding in vitro and the decay of RNA in vivo (PubMed:18078441).</text>
</comment>
<comment type="biophysicochemical properties">
    <kinetics>
        <KM evidence="10">0.23 uM for 5'-phosphorylated 14 base fluorogenic substrate</KM>
        <KM evidence="10">0.33 uM for 5'-OH 14 base fluorogenic substrate</KM>
        <KM evidence="11">0.12 uM for 5'-phosphorylated 13 base fluorogenic substrate</KM>
        <KM evidence="11">21 uM for 5'-OH 13 base fluorogenic substrate</KM>
        <text evidence="10 11">kcat is 2.1 min(-1) for 14-base 5'-PO(4) substrate and 0.096 min(-1) for 5-OH substrate (PubMed:15197283). kcat is 3.0 min(-1) for 13-base 5'-PO(4) substrate and 1.2 min(-1) for 5-OH substrate (PubMed:18078441).</text>
    </kinetics>
</comment>
<comment type="subunit">
    <text evidence="25 26 27">Homodimer, in equilibrium with possible higher multimers.</text>
</comment>
<comment type="interaction">
    <interactant intactId="EBI-545964">
        <id>P0A9J0</id>
    </interactant>
    <interactant intactId="EBI-543939">
        <id>P0A7V8</id>
        <label>rpsD</label>
    </interactant>
    <organismsDiffer>false</organismsDiffer>
    <experiments>2</experiments>
</comment>
<comment type="subcellular location">
    <subcellularLocation>
        <location evidence="14 25">Cytoplasm</location>
    </subcellularLocation>
    <subcellularLocation>
        <location evidence="14">Cell inner membrane</location>
        <topology evidence="28">Peripheral membrane protein</topology>
    </subcellularLocation>
    <subcellularLocation>
        <location evidence="23">Cytoplasm</location>
        <location evidence="23">Cytoskeleton</location>
    </subcellularLocation>
    <text evidence="23">Possible cytoskeletal location is upon overproduction.</text>
</comment>
<comment type="induction">
    <text evidence="15">Its mRNA is degraded by RNase III (rnc); in the presence of aminoglycoside antibiotics levels of rng mRNA decrease, leading to longer precursor 16S rRNA in the ribosome, which prevents antibiotic-binding and thus increases resistance to aminoglycosides.</text>
</comment>
<comment type="disruption phenotype">
    <text evidence="3 4 7 8 12 13 15 18">Slow processing of the 17S rRNA precursor to 16S rRNA, with significant accumulation of a 16.3S rRNA precursor with 66 extra nucleotides at its 5' end (PubMed:10329633, PubMed:10362534, PubMed:20176963, PubMed:32343306). Ribosomes with the precursor 16S rRNA show decreased translational fidelity and an increased sensitivity to aminoglycoside antibiotics neomycin and paromomycin (PubMed:20176963). In contrast another group, using independently generated rng deletions in 2 different strains, showed decreased sensitivity to aminoglycoside antibiotics kanamycin, neomycin, paromomycin and streptomycin (PubMed:24489121). A double rne-rng mutated strain no longer processes the 17S rRNA precursor (PubMed:10329633, PubMed:10362534). Significant accumulation of AdhE and enolase, greatly increased stability of adhE and eno mRNA (PubMed:11380618, PubMed:12450135). Accumulation of a 23S rRNA precursor (PubMed:21717341).</text>
</comment>
<comment type="similarity">
    <text evidence="24">Belongs to the RNase E/G family. RNase G subfamily.</text>
</comment>
<comment type="sequence caution" evidence="24">
    <conflict type="erroneous initiation">
        <sequence resource="EMBL-CDS" id="AAA58050"/>
    </conflict>
    <text>Extended N-terminus.</text>
</comment>
<organism>
    <name type="scientific">Escherichia coli (strain K12)</name>
    <dbReference type="NCBI Taxonomy" id="83333"/>
    <lineage>
        <taxon>Bacteria</taxon>
        <taxon>Pseudomonadati</taxon>
        <taxon>Pseudomonadota</taxon>
        <taxon>Gammaproteobacteria</taxon>
        <taxon>Enterobacterales</taxon>
        <taxon>Enterobacteriaceae</taxon>
        <taxon>Escherichia</taxon>
    </lineage>
</organism>